<protein>
    <recommendedName>
        <fullName evidence="1">ATP synthase subunit a</fullName>
    </recommendedName>
    <alternativeName>
        <fullName evidence="1">ATP synthase F0 sector subunit a</fullName>
    </alternativeName>
    <alternativeName>
        <fullName evidence="1">F-ATPase subunit 6</fullName>
    </alternativeName>
</protein>
<keyword id="KW-0066">ATP synthesis</keyword>
<keyword id="KW-1003">Cell membrane</keyword>
<keyword id="KW-0138">CF(0)</keyword>
<keyword id="KW-0375">Hydrogen ion transport</keyword>
<keyword id="KW-0406">Ion transport</keyword>
<keyword id="KW-0472">Membrane</keyword>
<keyword id="KW-0812">Transmembrane</keyword>
<keyword id="KW-1133">Transmembrane helix</keyword>
<keyword id="KW-0813">Transport</keyword>
<sequence>MRHAEGAAVSADPTQVLAFETDCHIFDGCGFPSPGLHSFLFEPLWGDHDSNLYFNKPMLLALLGSIVIVGFFWAAFRKPKVVPGKLQMVAEAGYDFIRRGVVYETIGKKEGEKYVPLVVSLFFFVWMMNLWSIIPVAQFPVTSIIAYPAVLAAIVYVTWITLTFKRQGFVGFFKNVTGYDKSLGPVLPLAMLIEFFSNILIRPFTHAVRLFANMFAGHTLLLLFTIASWYLLNGVGIAYAGVSFIMTVVMTAFELFIQALQAYVFVLLTCTYIQGAMAEHH</sequence>
<dbReference type="EMBL" id="Z22606">
    <property type="protein sequence ID" value="CAA80321.1"/>
    <property type="molecule type" value="Genomic_DNA"/>
</dbReference>
<dbReference type="PIR" id="S37541">
    <property type="entry name" value="S37541"/>
</dbReference>
<dbReference type="SMR" id="P50012"/>
<dbReference type="GO" id="GO:0005886">
    <property type="term" value="C:plasma membrane"/>
    <property type="evidence" value="ECO:0007669"/>
    <property type="project" value="UniProtKB-SubCell"/>
</dbReference>
<dbReference type="GO" id="GO:0045259">
    <property type="term" value="C:proton-transporting ATP synthase complex"/>
    <property type="evidence" value="ECO:0007669"/>
    <property type="project" value="UniProtKB-KW"/>
</dbReference>
<dbReference type="GO" id="GO:0046933">
    <property type="term" value="F:proton-transporting ATP synthase activity, rotational mechanism"/>
    <property type="evidence" value="ECO:0007669"/>
    <property type="project" value="UniProtKB-UniRule"/>
</dbReference>
<dbReference type="CDD" id="cd00310">
    <property type="entry name" value="ATP-synt_Fo_a_6"/>
    <property type="match status" value="1"/>
</dbReference>
<dbReference type="FunFam" id="1.20.120.220:FF:000010">
    <property type="entry name" value="ATP synthase subunit a"/>
    <property type="match status" value="1"/>
</dbReference>
<dbReference type="Gene3D" id="1.20.120.220">
    <property type="entry name" value="ATP synthase, F0 complex, subunit A"/>
    <property type="match status" value="1"/>
</dbReference>
<dbReference type="HAMAP" id="MF_01393">
    <property type="entry name" value="ATP_synth_a_bact"/>
    <property type="match status" value="1"/>
</dbReference>
<dbReference type="InterPro" id="IPR000568">
    <property type="entry name" value="ATP_synth_F0_asu"/>
</dbReference>
<dbReference type="InterPro" id="IPR023011">
    <property type="entry name" value="ATP_synth_F0_asu_AS"/>
</dbReference>
<dbReference type="InterPro" id="IPR045083">
    <property type="entry name" value="ATP_synth_F0_asu_bact/mt"/>
</dbReference>
<dbReference type="InterPro" id="IPR035908">
    <property type="entry name" value="F0_ATP_A_sf"/>
</dbReference>
<dbReference type="NCBIfam" id="TIGR01131">
    <property type="entry name" value="ATP_synt_6_or_A"/>
    <property type="match status" value="1"/>
</dbReference>
<dbReference type="PANTHER" id="PTHR11410">
    <property type="entry name" value="ATP SYNTHASE SUBUNIT A"/>
    <property type="match status" value="1"/>
</dbReference>
<dbReference type="PANTHER" id="PTHR11410:SF0">
    <property type="entry name" value="ATP SYNTHASE SUBUNIT A"/>
    <property type="match status" value="1"/>
</dbReference>
<dbReference type="Pfam" id="PF00119">
    <property type="entry name" value="ATP-synt_A"/>
    <property type="match status" value="1"/>
</dbReference>
<dbReference type="PRINTS" id="PR00123">
    <property type="entry name" value="ATPASEA"/>
</dbReference>
<dbReference type="SUPFAM" id="SSF81336">
    <property type="entry name" value="F1F0 ATP synthase subunit A"/>
    <property type="match status" value="1"/>
</dbReference>
<dbReference type="PROSITE" id="PS00449">
    <property type="entry name" value="ATPASE_A"/>
    <property type="match status" value="1"/>
</dbReference>
<reference key="1">
    <citation type="journal article" date="1995" name="Gene">
        <title>The ATP synthase (F1F0) of Streptomyces lividans: sequencing of the atp operon and phylogenetic considerations with subunit beta.</title>
        <authorList>
            <person name="Hensel M."/>
            <person name="Lill H."/>
            <person name="Schmid R."/>
            <person name="Deckers-Hebestreit G."/>
            <person name="Altendorf K."/>
        </authorList>
    </citation>
    <scope>NUCLEOTIDE SEQUENCE [GENOMIC DNA]</scope>
    <source>
        <strain>66 / 1326</strain>
    </source>
</reference>
<organism>
    <name type="scientific">Streptomyces lividans</name>
    <dbReference type="NCBI Taxonomy" id="1916"/>
    <lineage>
        <taxon>Bacteria</taxon>
        <taxon>Bacillati</taxon>
        <taxon>Actinomycetota</taxon>
        <taxon>Actinomycetes</taxon>
        <taxon>Kitasatosporales</taxon>
        <taxon>Streptomycetaceae</taxon>
        <taxon>Streptomyces</taxon>
    </lineage>
</organism>
<gene>
    <name evidence="1" type="primary">atpB</name>
</gene>
<proteinExistence type="inferred from homology"/>
<evidence type="ECO:0000255" key="1">
    <source>
        <dbReference type="HAMAP-Rule" id="MF_01393"/>
    </source>
</evidence>
<accession>P50012</accession>
<comment type="function">
    <text evidence="1">Key component of the proton channel; it plays a direct role in the translocation of protons across the membrane.</text>
</comment>
<comment type="subunit">
    <text evidence="1">F-type ATPases have 2 components, CF(1) - the catalytic core - and CF(0) - the membrane proton channel. CF(1) has five subunits: alpha(3), beta(3), gamma(1), delta(1), epsilon(1). CF(0) has three main subunits: a(1), b(2) and c(9-12). The alpha and beta chains form an alternating ring which encloses part of the gamma chain. CF(1) is attached to CF(0) by a central stalk formed by the gamma and epsilon chains, while a peripheral stalk is formed by the delta and b chains.</text>
</comment>
<comment type="subcellular location">
    <subcellularLocation>
        <location evidence="1">Cell membrane</location>
        <topology evidence="1">Multi-pass membrane protein</topology>
    </subcellularLocation>
</comment>
<comment type="similarity">
    <text evidence="1">Belongs to the ATPase A chain family.</text>
</comment>
<feature type="chain" id="PRO_0000082070" description="ATP synthase subunit a">
    <location>
        <begin position="1"/>
        <end position="281"/>
    </location>
</feature>
<feature type="transmembrane region" description="Helical" evidence="1">
    <location>
        <begin position="56"/>
        <end position="76"/>
    </location>
</feature>
<feature type="transmembrane region" description="Helical" evidence="1">
    <location>
        <begin position="117"/>
        <end position="137"/>
    </location>
</feature>
<feature type="transmembrane region" description="Helical" evidence="1">
    <location>
        <begin position="144"/>
        <end position="164"/>
    </location>
</feature>
<feature type="transmembrane region" description="Helical" evidence="1">
    <location>
        <begin position="181"/>
        <end position="201"/>
    </location>
</feature>
<feature type="transmembrane region" description="Helical" evidence="1">
    <location>
        <begin position="215"/>
        <end position="235"/>
    </location>
</feature>
<feature type="transmembrane region" description="Helical" evidence="1">
    <location>
        <begin position="237"/>
        <end position="257"/>
    </location>
</feature>
<feature type="transmembrane region" description="Helical" evidence="1">
    <location>
        <begin position="259"/>
        <end position="279"/>
    </location>
</feature>
<name>ATP6_STRLI</name>